<organism>
    <name type="scientific">Saccharomyces cerevisiae (strain ATCC 204508 / S288c)</name>
    <name type="common">Baker's yeast</name>
    <dbReference type="NCBI Taxonomy" id="559292"/>
    <lineage>
        <taxon>Eukaryota</taxon>
        <taxon>Fungi</taxon>
        <taxon>Dikarya</taxon>
        <taxon>Ascomycota</taxon>
        <taxon>Saccharomycotina</taxon>
        <taxon>Saccharomycetes</taxon>
        <taxon>Saccharomycetales</taxon>
        <taxon>Saccharomycetaceae</taxon>
        <taxon>Saccharomyces</taxon>
    </lineage>
</organism>
<accession>Q07788</accession>
<accession>D6VRA9</accession>
<proteinExistence type="evidence at protein level"/>
<dbReference type="EMBL" id="Z74296">
    <property type="protein sequence ID" value="CAA98828.1"/>
    <property type="molecule type" value="Genomic_DNA"/>
</dbReference>
<dbReference type="EMBL" id="BK006938">
    <property type="protein sequence ID" value="DAA11619.1"/>
    <property type="molecule type" value="Genomic_DNA"/>
</dbReference>
<dbReference type="PIR" id="S67813">
    <property type="entry name" value="S67813"/>
</dbReference>
<dbReference type="RefSeq" id="NP_010033.1">
    <property type="nucleotide sequence ID" value="NM_001180308.1"/>
</dbReference>
<dbReference type="BioGRID" id="31864">
    <property type="interactions" value="325"/>
</dbReference>
<dbReference type="DIP" id="DIP-7527N"/>
<dbReference type="FunCoup" id="Q07788">
    <property type="interactions" value="47"/>
</dbReference>
<dbReference type="IntAct" id="Q07788">
    <property type="interactions" value="4"/>
</dbReference>
<dbReference type="MINT" id="Q07788"/>
<dbReference type="STRING" id="4932.YDL248W"/>
<dbReference type="iPTMnet" id="Q07788"/>
<dbReference type="PaxDb" id="4932-YDL248W"/>
<dbReference type="PeptideAtlas" id="Q07788"/>
<dbReference type="EnsemblFungi" id="YDL248W_mRNA">
    <property type="protein sequence ID" value="YDL248W"/>
    <property type="gene ID" value="YDL248W"/>
</dbReference>
<dbReference type="GeneID" id="851348"/>
<dbReference type="KEGG" id="sce:YDL248W"/>
<dbReference type="AGR" id="SGD:S000002407"/>
<dbReference type="SGD" id="S000002407">
    <property type="gene designation" value="COS7"/>
</dbReference>
<dbReference type="VEuPathDB" id="FungiDB:YDL248W"/>
<dbReference type="eggNOG" id="ENOG502SAGH">
    <property type="taxonomic scope" value="Eukaryota"/>
</dbReference>
<dbReference type="GeneTree" id="ENSGT00940000176283"/>
<dbReference type="HOGENOM" id="CLU_062892_1_0_1"/>
<dbReference type="InParanoid" id="Q07788"/>
<dbReference type="OMA" id="WEVVVAN"/>
<dbReference type="OrthoDB" id="4070625at2759"/>
<dbReference type="BioCyc" id="YEAST:G3O-29623-MONOMER"/>
<dbReference type="BioGRID-ORCS" id="851348">
    <property type="hits" value="0 hits in 10 CRISPR screens"/>
</dbReference>
<dbReference type="PRO" id="PR:Q07788"/>
<dbReference type="Proteomes" id="UP000002311">
    <property type="component" value="Chromosome IV"/>
</dbReference>
<dbReference type="RNAct" id="Q07788">
    <property type="molecule type" value="protein"/>
</dbReference>
<dbReference type="GO" id="GO:0005768">
    <property type="term" value="C:endosome"/>
    <property type="evidence" value="ECO:0000250"/>
    <property type="project" value="SGD"/>
</dbReference>
<dbReference type="GO" id="GO:0000324">
    <property type="term" value="C:fungal-type vacuole"/>
    <property type="evidence" value="ECO:0007005"/>
    <property type="project" value="SGD"/>
</dbReference>
<dbReference type="GO" id="GO:0016020">
    <property type="term" value="C:membrane"/>
    <property type="evidence" value="ECO:0007669"/>
    <property type="project" value="UniProtKB-SubCell"/>
</dbReference>
<dbReference type="GO" id="GO:0005739">
    <property type="term" value="C:mitochondrion"/>
    <property type="evidence" value="ECO:0007005"/>
    <property type="project" value="SGD"/>
</dbReference>
<dbReference type="GO" id="GO:0038024">
    <property type="term" value="F:cargo receptor activity"/>
    <property type="evidence" value="ECO:0000315"/>
    <property type="project" value="SGD"/>
</dbReference>
<dbReference type="GO" id="GO:0043328">
    <property type="term" value="P:protein transport to vacuole involved in ubiquitin-dependent protein catabolic process via the multivesicular body sorting pathway"/>
    <property type="evidence" value="ECO:0000250"/>
    <property type="project" value="SGD"/>
</dbReference>
<dbReference type="InterPro" id="IPR001142">
    <property type="entry name" value="DUP/COS"/>
</dbReference>
<dbReference type="Pfam" id="PF00674">
    <property type="entry name" value="DUP"/>
    <property type="match status" value="2"/>
</dbReference>
<sequence>MKENEVKDEKSVDVLSFKQLESQKIVLPQDLFRSSFTWFCYEIYKSLAFRIWMLLWLPLSVWWKLSNNCIYPLIVSLLVLFLGPIFVLVICGLSRKRSLSKQLIQFCKEITENTPSSDPHDWEVVVANLNSYLYENKAWNTKNFFFNATDCEKMFRTTVLEPFSLKKDKAAKVKSFKDSVPYIEEALQVYATGFDKQWKLFITEKSWSPVGLEDVQLPKDIHRSKLTWFLKRIFTIYSLPLWLAFLNCICVSQHFCLAFRILCPGLFFLMMVWLFQNMRTTALLVKMEHKMQFLLTIINEQESGANGWDEIARKMNRYLFEKKAWKNEEFFFDGIDCEWFFSHFFYRLLSAKKSMWLLPLNVELWPYIKEAQLSRNEESLMKK</sequence>
<protein>
    <recommendedName>
        <fullName>Protein COS7</fullName>
    </recommendedName>
</protein>
<evidence type="ECO:0000255" key="1"/>
<evidence type="ECO:0000305" key="2"/>
<name>COS7_YEAST</name>
<reference key="1">
    <citation type="journal article" date="1997" name="Nature">
        <title>The nucleotide sequence of Saccharomyces cerevisiae chromosome IV.</title>
        <authorList>
            <person name="Jacq C."/>
            <person name="Alt-Moerbe J."/>
            <person name="Andre B."/>
            <person name="Arnold W."/>
            <person name="Bahr A."/>
            <person name="Ballesta J.P.G."/>
            <person name="Bargues M."/>
            <person name="Baron L."/>
            <person name="Becker A."/>
            <person name="Biteau N."/>
            <person name="Bloecker H."/>
            <person name="Blugeon C."/>
            <person name="Boskovic J."/>
            <person name="Brandt P."/>
            <person name="Brueckner M."/>
            <person name="Buitrago M.J."/>
            <person name="Coster F."/>
            <person name="Delaveau T."/>
            <person name="del Rey F."/>
            <person name="Dujon B."/>
            <person name="Eide L.G."/>
            <person name="Garcia-Cantalejo J.M."/>
            <person name="Goffeau A."/>
            <person name="Gomez-Peris A."/>
            <person name="Granotier C."/>
            <person name="Hanemann V."/>
            <person name="Hankeln T."/>
            <person name="Hoheisel J.D."/>
            <person name="Jaeger W."/>
            <person name="Jimenez A."/>
            <person name="Jonniaux J.-L."/>
            <person name="Kraemer C."/>
            <person name="Kuester H."/>
            <person name="Laamanen P."/>
            <person name="Legros Y."/>
            <person name="Louis E.J."/>
            <person name="Moeller-Rieker S."/>
            <person name="Monnet A."/>
            <person name="Moro M."/>
            <person name="Mueller-Auer S."/>
            <person name="Nussbaumer B."/>
            <person name="Paricio N."/>
            <person name="Paulin L."/>
            <person name="Perea J."/>
            <person name="Perez-Alonso M."/>
            <person name="Perez-Ortin J.E."/>
            <person name="Pohl T.M."/>
            <person name="Prydz H."/>
            <person name="Purnelle B."/>
            <person name="Rasmussen S.W."/>
            <person name="Remacha M.A."/>
            <person name="Revuelta J.L."/>
            <person name="Rieger M."/>
            <person name="Salom D."/>
            <person name="Saluz H.P."/>
            <person name="Saiz J.E."/>
            <person name="Saren A.-M."/>
            <person name="Schaefer M."/>
            <person name="Scharfe M."/>
            <person name="Schmidt E.R."/>
            <person name="Schneider C."/>
            <person name="Scholler P."/>
            <person name="Schwarz S."/>
            <person name="Soler-Mira A."/>
            <person name="Urrestarazu L.A."/>
            <person name="Verhasselt P."/>
            <person name="Vissers S."/>
            <person name="Voet M."/>
            <person name="Volckaert G."/>
            <person name="Wagner G."/>
            <person name="Wambutt R."/>
            <person name="Wedler E."/>
            <person name="Wedler H."/>
            <person name="Woelfl S."/>
            <person name="Harris D.E."/>
            <person name="Bowman S."/>
            <person name="Brown D."/>
            <person name="Churcher C.M."/>
            <person name="Connor R."/>
            <person name="Dedman K."/>
            <person name="Gentles S."/>
            <person name="Hamlin N."/>
            <person name="Hunt S."/>
            <person name="Jones L."/>
            <person name="McDonald S."/>
            <person name="Murphy L.D."/>
            <person name="Niblett D."/>
            <person name="Odell C."/>
            <person name="Oliver K."/>
            <person name="Rajandream M.A."/>
            <person name="Richards C."/>
            <person name="Shore L."/>
            <person name="Walsh S.V."/>
            <person name="Barrell B.G."/>
            <person name="Dietrich F.S."/>
            <person name="Mulligan J.T."/>
            <person name="Allen E."/>
            <person name="Araujo R."/>
            <person name="Aviles E."/>
            <person name="Berno A."/>
            <person name="Carpenter J."/>
            <person name="Chen E."/>
            <person name="Cherry J.M."/>
            <person name="Chung E."/>
            <person name="Duncan M."/>
            <person name="Hunicke-Smith S."/>
            <person name="Hyman R.W."/>
            <person name="Komp C."/>
            <person name="Lashkari D."/>
            <person name="Lew H."/>
            <person name="Lin D."/>
            <person name="Mosedale D."/>
            <person name="Nakahara K."/>
            <person name="Namath A."/>
            <person name="Oefner P."/>
            <person name="Oh C."/>
            <person name="Petel F.X."/>
            <person name="Roberts D."/>
            <person name="Schramm S."/>
            <person name="Schroeder M."/>
            <person name="Shogren T."/>
            <person name="Shroff N."/>
            <person name="Winant A."/>
            <person name="Yelton M.A."/>
            <person name="Botstein D."/>
            <person name="Davis R.W."/>
            <person name="Johnston M."/>
            <person name="Andrews S."/>
            <person name="Brinkman R."/>
            <person name="Cooper J."/>
            <person name="Ding H."/>
            <person name="Du Z."/>
            <person name="Favello A."/>
            <person name="Fulton L."/>
            <person name="Gattung S."/>
            <person name="Greco T."/>
            <person name="Hallsworth K."/>
            <person name="Hawkins J."/>
            <person name="Hillier L.W."/>
            <person name="Jier M."/>
            <person name="Johnson D."/>
            <person name="Johnston L."/>
            <person name="Kirsten J."/>
            <person name="Kucaba T."/>
            <person name="Langston Y."/>
            <person name="Latreille P."/>
            <person name="Le T."/>
            <person name="Mardis E."/>
            <person name="Menezes S."/>
            <person name="Miller N."/>
            <person name="Nhan M."/>
            <person name="Pauley A."/>
            <person name="Peluso D."/>
            <person name="Rifkin L."/>
            <person name="Riles L."/>
            <person name="Taich A."/>
            <person name="Trevaskis E."/>
            <person name="Vignati D."/>
            <person name="Wilcox L."/>
            <person name="Wohldman P."/>
            <person name="Vaudin M."/>
            <person name="Wilson R."/>
            <person name="Waterston R."/>
            <person name="Albermann K."/>
            <person name="Hani J."/>
            <person name="Heumann K."/>
            <person name="Kleine K."/>
            <person name="Mewes H.-W."/>
            <person name="Zollner A."/>
            <person name="Zaccaria P."/>
        </authorList>
    </citation>
    <scope>NUCLEOTIDE SEQUENCE [LARGE SCALE GENOMIC DNA]</scope>
    <source>
        <strain>ATCC 204508 / S288c</strain>
    </source>
</reference>
<reference key="2">
    <citation type="journal article" date="2014" name="G3 (Bethesda)">
        <title>The reference genome sequence of Saccharomyces cerevisiae: Then and now.</title>
        <authorList>
            <person name="Engel S.R."/>
            <person name="Dietrich F.S."/>
            <person name="Fisk D.G."/>
            <person name="Binkley G."/>
            <person name="Balakrishnan R."/>
            <person name="Costanzo M.C."/>
            <person name="Dwight S.S."/>
            <person name="Hitz B.C."/>
            <person name="Karra K."/>
            <person name="Nash R.S."/>
            <person name="Weng S."/>
            <person name="Wong E.D."/>
            <person name="Lloyd P."/>
            <person name="Skrzypek M.S."/>
            <person name="Miyasato S.R."/>
            <person name="Simison M."/>
            <person name="Cherry J.M."/>
        </authorList>
    </citation>
    <scope>GENOME REANNOTATION</scope>
    <source>
        <strain>ATCC 204508 / S288c</strain>
    </source>
</reference>
<reference key="3">
    <citation type="journal article" date="2006" name="Proc. Natl. Acad. Sci. U.S.A.">
        <title>A global topology map of the Saccharomyces cerevisiae membrane proteome.</title>
        <authorList>
            <person name="Kim H."/>
            <person name="Melen K."/>
            <person name="Oesterberg M."/>
            <person name="von Heijne G."/>
        </authorList>
    </citation>
    <scope>TOPOLOGY [LARGE SCALE ANALYSIS]</scope>
    <source>
        <strain>ATCC 208353 / W303-1A</strain>
    </source>
</reference>
<feature type="chain" id="PRO_0000207518" description="Protein COS7">
    <location>
        <begin position="1"/>
        <end position="383"/>
    </location>
</feature>
<feature type="topological domain" description="Cytoplasmic" evidence="1">
    <location>
        <begin position="1"/>
        <end position="42"/>
    </location>
</feature>
<feature type="transmembrane region" description="Helical" evidence="1">
    <location>
        <begin position="43"/>
        <end position="63"/>
    </location>
</feature>
<feature type="topological domain" description="Extracellular" evidence="1">
    <location>
        <begin position="64"/>
        <end position="72"/>
    </location>
</feature>
<feature type="transmembrane region" description="Helical" evidence="1">
    <location>
        <begin position="73"/>
        <end position="93"/>
    </location>
</feature>
<feature type="topological domain" description="Cytoplasmic" evidence="1">
    <location>
        <begin position="94"/>
        <end position="232"/>
    </location>
</feature>
<feature type="transmembrane region" description="Helical" evidence="1">
    <location>
        <begin position="233"/>
        <end position="253"/>
    </location>
</feature>
<feature type="topological domain" description="Extracellular" evidence="1">
    <location>
        <position position="254"/>
    </location>
</feature>
<feature type="transmembrane region" description="Helical" evidence="1">
    <location>
        <begin position="255"/>
        <end position="275"/>
    </location>
</feature>
<feature type="topological domain" description="Cytoplasmic" evidence="1">
    <location>
        <begin position="276"/>
        <end position="383"/>
    </location>
</feature>
<keyword id="KW-0472">Membrane</keyword>
<keyword id="KW-1185">Reference proteome</keyword>
<keyword id="KW-0812">Transmembrane</keyword>
<keyword id="KW-1133">Transmembrane helix</keyword>
<comment type="subcellular location">
    <subcellularLocation>
        <location>Membrane</location>
        <topology>Multi-pass membrane protein</topology>
    </subcellularLocation>
</comment>
<comment type="similarity">
    <text evidence="2">Belongs to the DUP/COS family.</text>
</comment>
<gene>
    <name type="primary">COS7</name>
    <name type="ordered locus">YDL248W</name>
</gene>